<sequence>MKLLIVEDDKLLQEGLLLALSHEGYACDCAGTAKEADALIGSAHYSLVILDLGLPDDDGLALLSRWRKNNYQHPVLILTARDKVDDRVSGLDVGADDYLAKPFALTELQARVRALIRRNQGSSNSKIQVDNITLDLNNQQVLLDEKPVVLTPKEFAILSRLVLKAGYQVHRELLHQDIYAWNDDPSSNSLEVHIHNLRQKIGKDRIRTLRGFGYLLTKGEQP</sequence>
<protein>
    <recommendedName>
        <fullName>Transcriptional regulatory protein PmrA</fullName>
    </recommendedName>
</protein>
<feature type="chain" id="PRO_0000232703" description="Transcriptional regulatory protein PmrA">
    <location>
        <begin position="1"/>
        <end position="222"/>
    </location>
</feature>
<feature type="domain" description="Response regulatory" evidence="1">
    <location>
        <begin position="2"/>
        <end position="116"/>
    </location>
</feature>
<feature type="DNA-binding region" description="OmpR/PhoB-type" evidence="2">
    <location>
        <begin position="124"/>
        <end position="218"/>
    </location>
</feature>
<feature type="modified residue" description="4-aspartylphosphate" evidence="1">
    <location>
        <position position="51"/>
    </location>
</feature>
<dbReference type="EMBL" id="AJ583007">
    <property type="protein sequence ID" value="CAE47079.1"/>
    <property type="molecule type" value="Genomic_DNA"/>
</dbReference>
<dbReference type="EMBL" id="CP003415">
    <property type="protein sequence ID" value="AFI92229.1"/>
    <property type="molecule type" value="Genomic_DNA"/>
</dbReference>
<dbReference type="RefSeq" id="WP_014701628.1">
    <property type="nucleotide sequence ID" value="NC_017845.1"/>
</dbReference>
<dbReference type="SMR" id="Q70FH0"/>
<dbReference type="STRING" id="1905730.W5S_4173"/>
<dbReference type="KEGG" id="pec:W5S_4173"/>
<dbReference type="PATRIC" id="fig|1166016.3.peg.4250"/>
<dbReference type="eggNOG" id="COG0745">
    <property type="taxonomic scope" value="Bacteria"/>
</dbReference>
<dbReference type="HOGENOM" id="CLU_000445_30_1_6"/>
<dbReference type="Proteomes" id="UP000008044">
    <property type="component" value="Chromosome"/>
</dbReference>
<dbReference type="GO" id="GO:0005829">
    <property type="term" value="C:cytosol"/>
    <property type="evidence" value="ECO:0007669"/>
    <property type="project" value="TreeGrafter"/>
</dbReference>
<dbReference type="GO" id="GO:0032993">
    <property type="term" value="C:protein-DNA complex"/>
    <property type="evidence" value="ECO:0007669"/>
    <property type="project" value="TreeGrafter"/>
</dbReference>
<dbReference type="GO" id="GO:0000156">
    <property type="term" value="F:phosphorelay response regulator activity"/>
    <property type="evidence" value="ECO:0007669"/>
    <property type="project" value="TreeGrafter"/>
</dbReference>
<dbReference type="GO" id="GO:0000976">
    <property type="term" value="F:transcription cis-regulatory region binding"/>
    <property type="evidence" value="ECO:0007669"/>
    <property type="project" value="TreeGrafter"/>
</dbReference>
<dbReference type="GO" id="GO:0006355">
    <property type="term" value="P:regulation of DNA-templated transcription"/>
    <property type="evidence" value="ECO:0007669"/>
    <property type="project" value="InterPro"/>
</dbReference>
<dbReference type="CDD" id="cd17624">
    <property type="entry name" value="REC_OmpR_PmrA-like"/>
    <property type="match status" value="1"/>
</dbReference>
<dbReference type="CDD" id="cd00383">
    <property type="entry name" value="trans_reg_C"/>
    <property type="match status" value="1"/>
</dbReference>
<dbReference type="FunFam" id="3.40.50.2300:FF:000002">
    <property type="entry name" value="DNA-binding response regulator PhoP"/>
    <property type="match status" value="1"/>
</dbReference>
<dbReference type="Gene3D" id="3.40.50.2300">
    <property type="match status" value="1"/>
</dbReference>
<dbReference type="Gene3D" id="6.10.250.690">
    <property type="match status" value="1"/>
</dbReference>
<dbReference type="Gene3D" id="1.10.10.10">
    <property type="entry name" value="Winged helix-like DNA-binding domain superfamily/Winged helix DNA-binding domain"/>
    <property type="match status" value="1"/>
</dbReference>
<dbReference type="InterPro" id="IPR011006">
    <property type="entry name" value="CheY-like_superfamily"/>
</dbReference>
<dbReference type="InterPro" id="IPR001867">
    <property type="entry name" value="OmpR/PhoB-type_DNA-bd"/>
</dbReference>
<dbReference type="InterPro" id="IPR001789">
    <property type="entry name" value="Sig_transdc_resp-reg_receiver"/>
</dbReference>
<dbReference type="InterPro" id="IPR039420">
    <property type="entry name" value="WalR-like"/>
</dbReference>
<dbReference type="InterPro" id="IPR036388">
    <property type="entry name" value="WH-like_DNA-bd_sf"/>
</dbReference>
<dbReference type="NCBIfam" id="NF007928">
    <property type="entry name" value="PRK10643.1"/>
    <property type="match status" value="1"/>
</dbReference>
<dbReference type="PANTHER" id="PTHR48111">
    <property type="entry name" value="REGULATOR OF RPOS"/>
    <property type="match status" value="1"/>
</dbReference>
<dbReference type="PANTHER" id="PTHR48111:SF75">
    <property type="entry name" value="TRANSCRIPTIONAL REGULATORY PROTEIN BASR"/>
    <property type="match status" value="1"/>
</dbReference>
<dbReference type="Pfam" id="PF00072">
    <property type="entry name" value="Response_reg"/>
    <property type="match status" value="1"/>
</dbReference>
<dbReference type="Pfam" id="PF00486">
    <property type="entry name" value="Trans_reg_C"/>
    <property type="match status" value="1"/>
</dbReference>
<dbReference type="SMART" id="SM00448">
    <property type="entry name" value="REC"/>
    <property type="match status" value="1"/>
</dbReference>
<dbReference type="SMART" id="SM00862">
    <property type="entry name" value="Trans_reg_C"/>
    <property type="match status" value="1"/>
</dbReference>
<dbReference type="SUPFAM" id="SSF52172">
    <property type="entry name" value="CheY-like"/>
    <property type="match status" value="1"/>
</dbReference>
<dbReference type="PROSITE" id="PS51755">
    <property type="entry name" value="OMPR_PHOB"/>
    <property type="match status" value="1"/>
</dbReference>
<dbReference type="PROSITE" id="PS50110">
    <property type="entry name" value="RESPONSE_REGULATORY"/>
    <property type="match status" value="1"/>
</dbReference>
<accession>Q70FH0</accession>
<accession>K4FN56</accession>
<gene>
    <name type="primary">pmrA</name>
    <name type="ordered locus">W5S_4173</name>
</gene>
<name>PMRA_PECPM</name>
<keyword id="KW-0963">Cytoplasm</keyword>
<keyword id="KW-0238">DNA-binding</keyword>
<keyword id="KW-0597">Phosphoprotein</keyword>
<keyword id="KW-0678">Repressor</keyword>
<keyword id="KW-0804">Transcription</keyword>
<keyword id="KW-0805">Transcription regulation</keyword>
<keyword id="KW-0902">Two-component regulatory system</keyword>
<keyword id="KW-0843">Virulence</keyword>
<reference key="1">
    <citation type="journal article" date="2003" name="Mol. Microbiol.">
        <title>The PmrA-PmrB two-component system responding to acidic pH and iron controls virulence in the plant pathogen Erwinia carotovora ssp. carotovora.</title>
        <authorList>
            <person name="Hyytiaeinen H."/>
            <person name="Sjoeblom S."/>
            <person name="Palomaeki T."/>
            <person name="Tuikkala A."/>
            <person name="Palva E.T."/>
        </authorList>
    </citation>
    <scope>NUCLEOTIDE SEQUENCE [GENOMIC DNA]</scope>
    <scope>FUNCTION</scope>
    <source>
        <strain>SCC3193</strain>
    </source>
</reference>
<reference key="2">
    <citation type="journal article" date="2012" name="J. Bacteriol.">
        <title>Genome sequence of Pectobacterium sp. strain SCC3193.</title>
        <authorList>
            <person name="Koskinen J.P."/>
            <person name="Laine P."/>
            <person name="Niemi O."/>
            <person name="Nykyri J."/>
            <person name="Harjunpaa H."/>
            <person name="Auvinen P."/>
            <person name="Paulin L."/>
            <person name="Pirhonen M."/>
            <person name="Palva T."/>
            <person name="Holm L."/>
        </authorList>
    </citation>
    <scope>NUCLEOTIDE SEQUENCE [LARGE SCALE GENOMIC DNA]</scope>
    <source>
        <strain>SCC3193</strain>
    </source>
</reference>
<evidence type="ECO:0000255" key="1">
    <source>
        <dbReference type="PROSITE-ProRule" id="PRU00169"/>
    </source>
</evidence>
<evidence type="ECO:0000255" key="2">
    <source>
        <dbReference type="PROSITE-ProRule" id="PRU01091"/>
    </source>
</evidence>
<evidence type="ECO:0000269" key="3">
    <source>
    </source>
</evidence>
<evidence type="ECO:0000305" key="4"/>
<organism>
    <name type="scientific">Pectobacterium parmentieri</name>
    <dbReference type="NCBI Taxonomy" id="1905730"/>
    <lineage>
        <taxon>Bacteria</taxon>
        <taxon>Pseudomonadati</taxon>
        <taxon>Pseudomonadota</taxon>
        <taxon>Gammaproteobacteria</taxon>
        <taxon>Enterobacterales</taxon>
        <taxon>Pectobacteriaceae</taxon>
        <taxon>Pectobacterium</taxon>
    </lineage>
</organism>
<comment type="function">
    <text evidence="3">Member of the two-component regulatory system PmrB/PmrA involved in regulation of virulence. Unphosphorylated PmrA represses extracellular enzyme genes. Phosphorylation of PmrA by PmrB relieves such repression, which leads to activation of extracellular enzyme genes. Phosphorylated PmrA seems to repress expression of the pmrCAB operon.</text>
</comment>
<comment type="subcellular location">
    <subcellularLocation>
        <location evidence="4">Cytoplasm</location>
    </subcellularLocation>
</comment>
<comment type="PTM">
    <text evidence="4">Phosphorylated by PmrB.</text>
</comment>
<proteinExistence type="inferred from homology"/>